<protein>
    <recommendedName>
        <fullName>Collagen alpha-2(I) chain</fullName>
    </recommendedName>
    <alternativeName>
        <fullName>Alpha-2 type I collagen</fullName>
    </alternativeName>
</protein>
<evidence type="ECO:0000250" key="1"/>
<evidence type="ECO:0000250" key="2">
    <source>
        <dbReference type="UniProtKB" id="P08123"/>
    </source>
</evidence>
<evidence type="ECO:0000255" key="3">
    <source>
        <dbReference type="PROSITE-ProRule" id="PRU00793"/>
    </source>
</evidence>
<evidence type="ECO:0000256" key="4">
    <source>
        <dbReference type="SAM" id="MobiDB-lite"/>
    </source>
</evidence>
<sequence length="526" mass="53129">GFPGEKGPSGEAGTAGPPGTPGPQGLLGAPGILGLPGSRGERGLPGVAGALGEPGPLGIAGPPGARGPPGAVGSPGVNGAPGEAGRDGNPGSDGPPGRDGQPGHKGERGYPGNAGPVGAAGAPGPQGSVGPTGKHGNRGEPGPAGSIGPVGAAGPRGPSGPQGIRGDKGEPGDKGPRGLPGIKGHNGLQGLPGLAGQHGDQGAPGAVGPAGPRGPAGPTGPAGKDGRSGHPGTVGPAGLRGSQGSQGPAGPPGPPGPPGPPGASGGGYDFGYDGDFYRADQPRSPPSLRPKDYEVDATLKSLNNQIETLLTPEGSRKNPARTCRDLRLSHPEWSSGYYWIDPNQGCTMDAIKVYCDFSTGETCIRAQPENISVKNWYKSSKAKKHVWLGETINGGTQFEYNVEGVTSKEMATQLAFMRLLANHASQNITYHCKNSIAYMDEETGNLNKAVILQGSNDVELVAEGNSRFTYTVLVDGCTKKTNEWGKTIIEYKTNKPSRLPFLDIAPLDIGGADQEFYVDVGPVCFK</sequence>
<keyword id="KW-0106">Calcium</keyword>
<keyword id="KW-0176">Collagen</keyword>
<keyword id="KW-1015">Disulfide bond</keyword>
<keyword id="KW-0272">Extracellular matrix</keyword>
<keyword id="KW-0379">Hydroxylation</keyword>
<keyword id="KW-0479">Metal-binding</keyword>
<keyword id="KW-1185">Reference proteome</keyword>
<keyword id="KW-0677">Repeat</keyword>
<keyword id="KW-0964">Secreted</keyword>
<proteinExistence type="evidence at transcript level"/>
<name>CO1A2_RABIT</name>
<organism>
    <name type="scientific">Oryctolagus cuniculus</name>
    <name type="common">Rabbit</name>
    <dbReference type="NCBI Taxonomy" id="9986"/>
    <lineage>
        <taxon>Eukaryota</taxon>
        <taxon>Metazoa</taxon>
        <taxon>Chordata</taxon>
        <taxon>Craniata</taxon>
        <taxon>Vertebrata</taxon>
        <taxon>Euteleostomi</taxon>
        <taxon>Mammalia</taxon>
        <taxon>Eutheria</taxon>
        <taxon>Euarchontoglires</taxon>
        <taxon>Glires</taxon>
        <taxon>Lagomorpha</taxon>
        <taxon>Leporidae</taxon>
        <taxon>Oryctolagus</taxon>
    </lineage>
</organism>
<comment type="function">
    <text>Type I collagen is a member of group I collagen (fibrillar forming collagen).</text>
</comment>
<comment type="subunit">
    <text evidence="2">Trimers of one alpha 2(I) and two alpha 1(I) chains. Interacts (via C-terminus) with TMEM131 (via PapD-L domain); the interaction is direct and is involved in assembly and TRAPPIII ER-to-Golgi transport complex-dependent secretion of collagen.</text>
</comment>
<comment type="subcellular location">
    <subcellularLocation>
        <location evidence="3">Secreted</location>
        <location evidence="3">Extracellular space</location>
        <location evidence="3">Extracellular matrix</location>
    </subcellularLocation>
</comment>
<comment type="tissue specificity">
    <text>Forms the fibrils of tendon, ligaments and bones. In bones the fibrils are mineralized with calcium hydroxyapatite.</text>
</comment>
<comment type="domain">
    <text evidence="1">The C-terminal propeptide, also known as COLFI domain, have crucial roles in tissue growth and repair by controlling both the intracellular assembly of procollagen molecules and the extracellular assembly of collagen fibrils. It binds a calcium ion which is essential for its function (By similarity).</text>
</comment>
<comment type="PTM">
    <text>Prolines at the third position of the tripeptide repeating unit (G-X-Y) are hydroxylated in some or all of the chains.</text>
</comment>
<comment type="similarity">
    <text evidence="3">Belongs to the fibrillar collagen family.</text>
</comment>
<gene>
    <name type="primary">COL1A2</name>
</gene>
<reference key="1">
    <citation type="journal article" date="1995" name="Biomed. Res.">
        <title>Alpha 2 type I collagen gene expression in the rabbit knee ligaments: variations during the newborn development and in the adult age.</title>
        <authorList>
            <person name="Inoue S."/>
            <person name="Okazaki T."/>
        </authorList>
    </citation>
    <scope>NUCLEOTIDE SEQUENCE [MRNA]</scope>
    <source>
        <strain>New Zealand white</strain>
        <tissue>Calvaria</tissue>
    </source>
</reference>
<accession>Q28668</accession>
<dbReference type="EMBL" id="D49399">
    <property type="protein sequence ID" value="BAA08391.1"/>
    <property type="molecule type" value="mRNA"/>
</dbReference>
<dbReference type="PIR" id="I46677">
    <property type="entry name" value="I46677"/>
</dbReference>
<dbReference type="SMR" id="Q28668"/>
<dbReference type="STRING" id="9986.ENSOCUP00000010575"/>
<dbReference type="PaxDb" id="9986-ENSOCUP00000010575"/>
<dbReference type="eggNOG" id="KOG3544">
    <property type="taxonomic scope" value="Eukaryota"/>
</dbReference>
<dbReference type="InParanoid" id="Q28668"/>
<dbReference type="Proteomes" id="UP000001811">
    <property type="component" value="Unplaced"/>
</dbReference>
<dbReference type="GO" id="GO:0005581">
    <property type="term" value="C:collagen trimer"/>
    <property type="evidence" value="ECO:0007669"/>
    <property type="project" value="UniProtKB-KW"/>
</dbReference>
<dbReference type="GO" id="GO:0005576">
    <property type="term" value="C:extracellular region"/>
    <property type="evidence" value="ECO:0007669"/>
    <property type="project" value="UniProtKB-KW"/>
</dbReference>
<dbReference type="GO" id="GO:0005201">
    <property type="term" value="F:extracellular matrix structural constituent"/>
    <property type="evidence" value="ECO:0007669"/>
    <property type="project" value="InterPro"/>
</dbReference>
<dbReference type="GO" id="GO:0046872">
    <property type="term" value="F:metal ion binding"/>
    <property type="evidence" value="ECO:0007669"/>
    <property type="project" value="UniProtKB-KW"/>
</dbReference>
<dbReference type="FunFam" id="2.60.120.1000:FF:000001">
    <property type="entry name" value="Collagen alpha-1 type I chain"/>
    <property type="match status" value="1"/>
</dbReference>
<dbReference type="Gene3D" id="2.60.120.1000">
    <property type="match status" value="1"/>
</dbReference>
<dbReference type="InterPro" id="IPR008160">
    <property type="entry name" value="Collagen"/>
</dbReference>
<dbReference type="InterPro" id="IPR000885">
    <property type="entry name" value="Fib_collagen_C"/>
</dbReference>
<dbReference type="PANTHER" id="PTHR24637">
    <property type="entry name" value="COLLAGEN"/>
    <property type="match status" value="1"/>
</dbReference>
<dbReference type="PANTHER" id="PTHR24637:SF377">
    <property type="entry name" value="COLLAGEN TYPE IX ALPHA 1 CHAIN"/>
    <property type="match status" value="1"/>
</dbReference>
<dbReference type="Pfam" id="PF01410">
    <property type="entry name" value="COLFI"/>
    <property type="match status" value="1"/>
</dbReference>
<dbReference type="Pfam" id="PF01391">
    <property type="entry name" value="Collagen"/>
    <property type="match status" value="2"/>
</dbReference>
<dbReference type="SMART" id="SM00038">
    <property type="entry name" value="COLFI"/>
    <property type="match status" value="1"/>
</dbReference>
<dbReference type="PROSITE" id="PS51461">
    <property type="entry name" value="NC1_FIB"/>
    <property type="match status" value="1"/>
</dbReference>
<feature type="chain" id="PRO_0000005810" description="Collagen alpha-2(I) chain">
    <location>
        <begin position="1" status="less than"/>
        <end position="262"/>
    </location>
</feature>
<feature type="propeptide" id="PRO_0000005811" description="C-terminal propeptide" evidence="1">
    <location>
        <begin position="263"/>
        <end position="526"/>
    </location>
</feature>
<feature type="domain" description="Fibrillar collagen NC1" evidence="3">
    <location>
        <begin position="293"/>
        <end position="526"/>
    </location>
</feature>
<feature type="region of interest" description="Disordered" evidence="4">
    <location>
        <begin position="1"/>
        <end position="291"/>
    </location>
</feature>
<feature type="compositionally biased region" description="Low complexity" evidence="4">
    <location>
        <begin position="9"/>
        <end position="36"/>
    </location>
</feature>
<feature type="compositionally biased region" description="Low complexity" evidence="4">
    <location>
        <begin position="44"/>
        <end position="81"/>
    </location>
</feature>
<feature type="compositionally biased region" description="Low complexity" evidence="4">
    <location>
        <begin position="110"/>
        <end position="131"/>
    </location>
</feature>
<feature type="compositionally biased region" description="Basic and acidic residues" evidence="4">
    <location>
        <begin position="165"/>
        <end position="176"/>
    </location>
</feature>
<feature type="compositionally biased region" description="Pro residues" evidence="4">
    <location>
        <begin position="249"/>
        <end position="261"/>
    </location>
</feature>
<feature type="binding site" evidence="1">
    <location>
        <position position="341"/>
    </location>
    <ligand>
        <name>Ca(2+)</name>
        <dbReference type="ChEBI" id="CHEBI:29108"/>
    </ligand>
</feature>
<feature type="binding site" evidence="1">
    <location>
        <position position="343"/>
    </location>
    <ligand>
        <name>Ca(2+)</name>
        <dbReference type="ChEBI" id="CHEBI:29108"/>
    </ligand>
</feature>
<feature type="binding site" evidence="1">
    <location>
        <position position="344"/>
    </location>
    <ligand>
        <name>Ca(2+)</name>
        <dbReference type="ChEBI" id="CHEBI:29108"/>
    </ligand>
</feature>
<feature type="binding site" evidence="1">
    <location>
        <position position="346"/>
    </location>
    <ligand>
        <name>Ca(2+)</name>
        <dbReference type="ChEBI" id="CHEBI:29108"/>
    </ligand>
</feature>
<feature type="binding site" evidence="1">
    <location>
        <position position="349"/>
    </location>
    <ligand>
        <name>Ca(2+)</name>
        <dbReference type="ChEBI" id="CHEBI:29108"/>
    </ligand>
</feature>
<feature type="disulfide bond" evidence="3">
    <location>
        <begin position="323"/>
        <end position="355"/>
    </location>
</feature>
<feature type="disulfide bond" evidence="3">
    <location>
        <begin position="363"/>
        <end position="524"/>
    </location>
</feature>
<feature type="disulfide bond" evidence="3">
    <location>
        <begin position="432"/>
        <end position="477"/>
    </location>
</feature>
<feature type="non-terminal residue">
    <location>
        <position position="1"/>
    </location>
</feature>